<accession>Q5HGM3</accession>
<keyword id="KW-0002">3D-structure</keyword>
<keyword id="KW-0067">ATP-binding</keyword>
<keyword id="KW-0963">Cytoplasm</keyword>
<keyword id="KW-0418">Kinase</keyword>
<keyword id="KW-0547">Nucleotide-binding</keyword>
<keyword id="KW-0808">Transferase</keyword>
<proteinExistence type="evidence at protein level"/>
<organism>
    <name type="scientific">Staphylococcus aureus (strain COL)</name>
    <dbReference type="NCBI Taxonomy" id="93062"/>
    <lineage>
        <taxon>Bacteria</taxon>
        <taxon>Bacillati</taxon>
        <taxon>Bacillota</taxon>
        <taxon>Bacilli</taxon>
        <taxon>Bacillales</taxon>
        <taxon>Staphylococcaceae</taxon>
        <taxon>Staphylococcus</taxon>
    </lineage>
</organism>
<feature type="chain" id="PRO_0000170603" description="Guanylate kinase">
    <location>
        <begin position="1"/>
        <end position="207"/>
    </location>
</feature>
<feature type="domain" description="Guanylate kinase-like" evidence="1">
    <location>
        <begin position="6"/>
        <end position="185"/>
    </location>
</feature>
<feature type="binding site" evidence="1">
    <location>
        <begin position="13"/>
        <end position="20"/>
    </location>
    <ligand>
        <name>ATP</name>
        <dbReference type="ChEBI" id="CHEBI:30616"/>
    </ligand>
</feature>
<feature type="strand" evidence="2">
    <location>
        <begin position="8"/>
        <end position="12"/>
    </location>
</feature>
<feature type="helix" evidence="2">
    <location>
        <begin position="19"/>
        <end position="28"/>
    </location>
</feature>
<feature type="turn" evidence="2">
    <location>
        <begin position="51"/>
        <end position="53"/>
    </location>
</feature>
<feature type="helix" evidence="2">
    <location>
        <begin position="60"/>
        <end position="68"/>
    </location>
</feature>
<feature type="strand" evidence="2">
    <location>
        <begin position="72"/>
        <end position="78"/>
    </location>
</feature>
<feature type="strand" evidence="2">
    <location>
        <begin position="81"/>
        <end position="86"/>
    </location>
</feature>
<feature type="helix" evidence="2">
    <location>
        <begin position="87"/>
        <end position="95"/>
    </location>
</feature>
<feature type="strand" evidence="2">
    <location>
        <begin position="99"/>
        <end position="103"/>
    </location>
</feature>
<feature type="helix" evidence="2">
    <location>
        <begin position="106"/>
        <end position="108"/>
    </location>
</feature>
<feature type="helix" evidence="2">
    <location>
        <begin position="109"/>
        <end position="115"/>
    </location>
</feature>
<feature type="strand" evidence="2">
    <location>
        <begin position="119"/>
        <end position="125"/>
    </location>
</feature>
<feature type="helix" evidence="2">
    <location>
        <begin position="151"/>
        <end position="155"/>
    </location>
</feature>
<feature type="helix" evidence="2">
    <location>
        <begin position="157"/>
        <end position="163"/>
    </location>
</feature>
<feature type="strand" evidence="2">
    <location>
        <begin position="165"/>
        <end position="169"/>
    </location>
</feature>
<feature type="helix" evidence="2">
    <location>
        <begin position="173"/>
        <end position="188"/>
    </location>
</feature>
<feature type="helix" evidence="2">
    <location>
        <begin position="191"/>
        <end position="196"/>
    </location>
</feature>
<feature type="helix" evidence="2">
    <location>
        <begin position="198"/>
        <end position="204"/>
    </location>
</feature>
<comment type="function">
    <text evidence="1">Essential for recycling GMP and indirectly, cGMP.</text>
</comment>
<comment type="catalytic activity">
    <reaction evidence="1">
        <text>GMP + ATP = GDP + ADP</text>
        <dbReference type="Rhea" id="RHEA:20780"/>
        <dbReference type="ChEBI" id="CHEBI:30616"/>
        <dbReference type="ChEBI" id="CHEBI:58115"/>
        <dbReference type="ChEBI" id="CHEBI:58189"/>
        <dbReference type="ChEBI" id="CHEBI:456216"/>
        <dbReference type="EC" id="2.7.4.8"/>
    </reaction>
</comment>
<comment type="subcellular location">
    <subcellularLocation>
        <location evidence="1">Cytoplasm</location>
    </subcellularLocation>
</comment>
<comment type="similarity">
    <text evidence="1">Belongs to the guanylate kinase family.</text>
</comment>
<evidence type="ECO:0000255" key="1">
    <source>
        <dbReference type="HAMAP-Rule" id="MF_00328"/>
    </source>
</evidence>
<evidence type="ECO:0007829" key="2">
    <source>
        <dbReference type="PDB" id="2J41"/>
    </source>
</evidence>
<gene>
    <name evidence="1" type="primary">gmk</name>
    <name type="ordered locus">SACOL1221</name>
</gene>
<sequence>MDNEKGLLIVLSGPSGVGKGTVRKRIFEDPSTSYKYSISMTTRQMREGEVDGVDYFFKTRDAFEALIKDDQFIEYAEYVGNYYGTPVQYVKDTMDEGHDVFLEIEVEGAKQVRKKFPDALFIFLAPPSLEHLRERLVGRGTESDEKIQSRINEARKEVEMMNLYDYVVVNDEVELAKNRIQCIVEAEHLKRERVEAKYRKMILEAKK</sequence>
<dbReference type="EC" id="2.7.4.8" evidence="1"/>
<dbReference type="EMBL" id="CP000046">
    <property type="protein sequence ID" value="AAW38058.1"/>
    <property type="molecule type" value="Genomic_DNA"/>
</dbReference>
<dbReference type="RefSeq" id="WP_000368227.1">
    <property type="nucleotide sequence ID" value="NZ_JBGOFO010000002.1"/>
</dbReference>
<dbReference type="PDB" id="2J41">
    <property type="method" value="X-ray"/>
    <property type="resolution" value="1.90 A"/>
    <property type="chains" value="A/B/C/D=1-207"/>
</dbReference>
<dbReference type="PDBsum" id="2J41"/>
<dbReference type="SMR" id="Q5HGM3"/>
<dbReference type="KEGG" id="sac:SACOL1221"/>
<dbReference type="HOGENOM" id="CLU_001715_1_2_9"/>
<dbReference type="EvolutionaryTrace" id="Q5HGM3"/>
<dbReference type="Proteomes" id="UP000000530">
    <property type="component" value="Chromosome"/>
</dbReference>
<dbReference type="GO" id="GO:0005829">
    <property type="term" value="C:cytosol"/>
    <property type="evidence" value="ECO:0007669"/>
    <property type="project" value="TreeGrafter"/>
</dbReference>
<dbReference type="GO" id="GO:0005524">
    <property type="term" value="F:ATP binding"/>
    <property type="evidence" value="ECO:0007669"/>
    <property type="project" value="UniProtKB-UniRule"/>
</dbReference>
<dbReference type="GO" id="GO:0004385">
    <property type="term" value="F:guanylate kinase activity"/>
    <property type="evidence" value="ECO:0007669"/>
    <property type="project" value="UniProtKB-UniRule"/>
</dbReference>
<dbReference type="CDD" id="cd00071">
    <property type="entry name" value="GMPK"/>
    <property type="match status" value="1"/>
</dbReference>
<dbReference type="FunFam" id="3.40.50.300:FF:000855">
    <property type="entry name" value="Guanylate kinase"/>
    <property type="match status" value="1"/>
</dbReference>
<dbReference type="FunFam" id="3.30.63.10:FF:000002">
    <property type="entry name" value="Guanylate kinase 1"/>
    <property type="match status" value="1"/>
</dbReference>
<dbReference type="Gene3D" id="3.30.63.10">
    <property type="entry name" value="Guanylate Kinase phosphate binding domain"/>
    <property type="match status" value="1"/>
</dbReference>
<dbReference type="Gene3D" id="3.40.50.300">
    <property type="entry name" value="P-loop containing nucleotide triphosphate hydrolases"/>
    <property type="match status" value="1"/>
</dbReference>
<dbReference type="HAMAP" id="MF_00328">
    <property type="entry name" value="Guanylate_kinase"/>
    <property type="match status" value="1"/>
</dbReference>
<dbReference type="InterPro" id="IPR008145">
    <property type="entry name" value="GK/Ca_channel_bsu"/>
</dbReference>
<dbReference type="InterPro" id="IPR008144">
    <property type="entry name" value="Guanylate_kin-like_dom"/>
</dbReference>
<dbReference type="InterPro" id="IPR017665">
    <property type="entry name" value="Guanylate_kinase"/>
</dbReference>
<dbReference type="InterPro" id="IPR020590">
    <property type="entry name" value="Guanylate_kinase_CS"/>
</dbReference>
<dbReference type="InterPro" id="IPR027417">
    <property type="entry name" value="P-loop_NTPase"/>
</dbReference>
<dbReference type="NCBIfam" id="TIGR03263">
    <property type="entry name" value="guanyl_kin"/>
    <property type="match status" value="1"/>
</dbReference>
<dbReference type="PANTHER" id="PTHR23117:SF13">
    <property type="entry name" value="GUANYLATE KINASE"/>
    <property type="match status" value="1"/>
</dbReference>
<dbReference type="PANTHER" id="PTHR23117">
    <property type="entry name" value="GUANYLATE KINASE-RELATED"/>
    <property type="match status" value="1"/>
</dbReference>
<dbReference type="Pfam" id="PF00625">
    <property type="entry name" value="Guanylate_kin"/>
    <property type="match status" value="1"/>
</dbReference>
<dbReference type="SMART" id="SM00072">
    <property type="entry name" value="GuKc"/>
    <property type="match status" value="1"/>
</dbReference>
<dbReference type="SUPFAM" id="SSF52540">
    <property type="entry name" value="P-loop containing nucleoside triphosphate hydrolases"/>
    <property type="match status" value="1"/>
</dbReference>
<dbReference type="PROSITE" id="PS00856">
    <property type="entry name" value="GUANYLATE_KINASE_1"/>
    <property type="match status" value="1"/>
</dbReference>
<dbReference type="PROSITE" id="PS50052">
    <property type="entry name" value="GUANYLATE_KINASE_2"/>
    <property type="match status" value="1"/>
</dbReference>
<protein>
    <recommendedName>
        <fullName evidence="1">Guanylate kinase</fullName>
        <ecNumber evidence="1">2.7.4.8</ecNumber>
    </recommendedName>
    <alternativeName>
        <fullName evidence="1">GMP kinase</fullName>
    </alternativeName>
</protein>
<reference key="1">
    <citation type="journal article" date="2005" name="J. Bacteriol.">
        <title>Insights on evolution of virulence and resistance from the complete genome analysis of an early methicillin-resistant Staphylococcus aureus strain and a biofilm-producing methicillin-resistant Staphylococcus epidermidis strain.</title>
        <authorList>
            <person name="Gill S.R."/>
            <person name="Fouts D.E."/>
            <person name="Archer G.L."/>
            <person name="Mongodin E.F."/>
            <person name="DeBoy R.T."/>
            <person name="Ravel J."/>
            <person name="Paulsen I.T."/>
            <person name="Kolonay J.F."/>
            <person name="Brinkac L.M."/>
            <person name="Beanan M.J."/>
            <person name="Dodson R.J."/>
            <person name="Daugherty S.C."/>
            <person name="Madupu R."/>
            <person name="Angiuoli S.V."/>
            <person name="Durkin A.S."/>
            <person name="Haft D.H."/>
            <person name="Vamathevan J.J."/>
            <person name="Khouri H."/>
            <person name="Utterback T.R."/>
            <person name="Lee C."/>
            <person name="Dimitrov G."/>
            <person name="Jiang L."/>
            <person name="Qin H."/>
            <person name="Weidman J."/>
            <person name="Tran K."/>
            <person name="Kang K.H."/>
            <person name="Hance I.R."/>
            <person name="Nelson K.E."/>
            <person name="Fraser C.M."/>
        </authorList>
    </citation>
    <scope>NUCLEOTIDE SEQUENCE [LARGE SCALE GENOMIC DNA]</scope>
    <source>
        <strain>COL</strain>
    </source>
</reference>
<name>KGUA_STAAC</name>